<reference key="1">
    <citation type="submission" date="2007-03" db="EMBL/GenBank/DDBJ databases">
        <title>Complete sequence of Desulfotomaculum reducens MI-1.</title>
        <authorList>
            <consortium name="US DOE Joint Genome Institute"/>
            <person name="Copeland A."/>
            <person name="Lucas S."/>
            <person name="Lapidus A."/>
            <person name="Barry K."/>
            <person name="Detter J.C."/>
            <person name="Glavina del Rio T."/>
            <person name="Hammon N."/>
            <person name="Israni S."/>
            <person name="Dalin E."/>
            <person name="Tice H."/>
            <person name="Pitluck S."/>
            <person name="Sims D."/>
            <person name="Brettin T."/>
            <person name="Bruce D."/>
            <person name="Han C."/>
            <person name="Tapia R."/>
            <person name="Schmutz J."/>
            <person name="Larimer F."/>
            <person name="Land M."/>
            <person name="Hauser L."/>
            <person name="Kyrpides N."/>
            <person name="Kim E."/>
            <person name="Tebo B.M."/>
            <person name="Richardson P."/>
        </authorList>
    </citation>
    <scope>NUCLEOTIDE SEQUENCE [LARGE SCALE GENOMIC DNA]</scope>
    <source>
        <strain>ATCC BAA-1160 / DSM 100696 / MI-1</strain>
    </source>
</reference>
<organism>
    <name type="scientific">Desulforamulus reducens (strain ATCC BAA-1160 / DSM 100696 / MI-1)</name>
    <name type="common">Desulfotomaculum reducens</name>
    <dbReference type="NCBI Taxonomy" id="349161"/>
    <lineage>
        <taxon>Bacteria</taxon>
        <taxon>Bacillati</taxon>
        <taxon>Bacillota</taxon>
        <taxon>Clostridia</taxon>
        <taxon>Eubacteriales</taxon>
        <taxon>Peptococcaceae</taxon>
        <taxon>Desulforamulus</taxon>
    </lineage>
</organism>
<sequence length="120" mass="13628">MSHRPERVAEAIKKEVADLIRNDIKDPRIGFVTITGVEVTRDLSFAKIFISVMGSDAHRQETLSILQKSAGYMRSEIGRRIKLRHAPELIFKLDTSLDHGTRIAEILHEINSQEAKPTHE</sequence>
<gene>
    <name evidence="1" type="primary">rbfA</name>
    <name type="ordered locus">Dred_1956</name>
</gene>
<dbReference type="EMBL" id="CP000612">
    <property type="protein sequence ID" value="ABO50474.1"/>
    <property type="molecule type" value="Genomic_DNA"/>
</dbReference>
<dbReference type="RefSeq" id="WP_011878284.1">
    <property type="nucleotide sequence ID" value="NC_009253.1"/>
</dbReference>
<dbReference type="SMR" id="A4J5X1"/>
<dbReference type="STRING" id="349161.Dred_1956"/>
<dbReference type="KEGG" id="drm:Dred_1956"/>
<dbReference type="eggNOG" id="COG0858">
    <property type="taxonomic scope" value="Bacteria"/>
</dbReference>
<dbReference type="HOGENOM" id="CLU_089475_6_3_9"/>
<dbReference type="OrthoDB" id="307788at2"/>
<dbReference type="Proteomes" id="UP000001556">
    <property type="component" value="Chromosome"/>
</dbReference>
<dbReference type="GO" id="GO:0005829">
    <property type="term" value="C:cytosol"/>
    <property type="evidence" value="ECO:0007669"/>
    <property type="project" value="TreeGrafter"/>
</dbReference>
<dbReference type="GO" id="GO:0043024">
    <property type="term" value="F:ribosomal small subunit binding"/>
    <property type="evidence" value="ECO:0007669"/>
    <property type="project" value="TreeGrafter"/>
</dbReference>
<dbReference type="GO" id="GO:0030490">
    <property type="term" value="P:maturation of SSU-rRNA"/>
    <property type="evidence" value="ECO:0007669"/>
    <property type="project" value="UniProtKB-UniRule"/>
</dbReference>
<dbReference type="Gene3D" id="3.30.300.20">
    <property type="match status" value="1"/>
</dbReference>
<dbReference type="HAMAP" id="MF_00003">
    <property type="entry name" value="RbfA"/>
    <property type="match status" value="1"/>
</dbReference>
<dbReference type="InterPro" id="IPR015946">
    <property type="entry name" value="KH_dom-like_a/b"/>
</dbReference>
<dbReference type="InterPro" id="IPR000238">
    <property type="entry name" value="RbfA"/>
</dbReference>
<dbReference type="InterPro" id="IPR023799">
    <property type="entry name" value="RbfA_dom_sf"/>
</dbReference>
<dbReference type="InterPro" id="IPR020053">
    <property type="entry name" value="Ribosome-bd_factorA_CS"/>
</dbReference>
<dbReference type="NCBIfam" id="TIGR00082">
    <property type="entry name" value="rbfA"/>
    <property type="match status" value="1"/>
</dbReference>
<dbReference type="PANTHER" id="PTHR33515">
    <property type="entry name" value="RIBOSOME-BINDING FACTOR A, CHLOROPLASTIC-RELATED"/>
    <property type="match status" value="1"/>
</dbReference>
<dbReference type="PANTHER" id="PTHR33515:SF1">
    <property type="entry name" value="RIBOSOME-BINDING FACTOR A, CHLOROPLASTIC-RELATED"/>
    <property type="match status" value="1"/>
</dbReference>
<dbReference type="Pfam" id="PF02033">
    <property type="entry name" value="RBFA"/>
    <property type="match status" value="1"/>
</dbReference>
<dbReference type="SUPFAM" id="SSF89919">
    <property type="entry name" value="Ribosome-binding factor A, RbfA"/>
    <property type="match status" value="1"/>
</dbReference>
<dbReference type="PROSITE" id="PS01319">
    <property type="entry name" value="RBFA"/>
    <property type="match status" value="1"/>
</dbReference>
<protein>
    <recommendedName>
        <fullName evidence="1">Ribosome-binding factor A</fullName>
    </recommendedName>
</protein>
<accession>A4J5X1</accession>
<name>RBFA_DESRM</name>
<keyword id="KW-0963">Cytoplasm</keyword>
<keyword id="KW-1185">Reference proteome</keyword>
<keyword id="KW-0690">Ribosome biogenesis</keyword>
<proteinExistence type="inferred from homology"/>
<feature type="chain" id="PRO_1000070905" description="Ribosome-binding factor A">
    <location>
        <begin position="1"/>
        <end position="120"/>
    </location>
</feature>
<comment type="function">
    <text evidence="1">One of several proteins that assist in the late maturation steps of the functional core of the 30S ribosomal subunit. Associates with free 30S ribosomal subunits (but not with 30S subunits that are part of 70S ribosomes or polysomes). Required for efficient processing of 16S rRNA. May interact with the 5'-terminal helix region of 16S rRNA.</text>
</comment>
<comment type="subunit">
    <text evidence="1">Monomer. Binds 30S ribosomal subunits, but not 50S ribosomal subunits or 70S ribosomes.</text>
</comment>
<comment type="subcellular location">
    <subcellularLocation>
        <location evidence="1">Cytoplasm</location>
    </subcellularLocation>
</comment>
<comment type="similarity">
    <text evidence="1">Belongs to the RbfA family.</text>
</comment>
<evidence type="ECO:0000255" key="1">
    <source>
        <dbReference type="HAMAP-Rule" id="MF_00003"/>
    </source>
</evidence>